<name>RL16_LISMC</name>
<organism>
    <name type="scientific">Listeria monocytogenes serotype 4b (strain CLIP80459)</name>
    <dbReference type="NCBI Taxonomy" id="568819"/>
    <lineage>
        <taxon>Bacteria</taxon>
        <taxon>Bacillati</taxon>
        <taxon>Bacillota</taxon>
        <taxon>Bacilli</taxon>
        <taxon>Bacillales</taxon>
        <taxon>Listeriaceae</taxon>
        <taxon>Listeria</taxon>
    </lineage>
</organism>
<comment type="function">
    <text evidence="1">Binds 23S rRNA and is also seen to make contacts with the A and possibly P site tRNAs.</text>
</comment>
<comment type="subunit">
    <text evidence="1">Part of the 50S ribosomal subunit.</text>
</comment>
<comment type="similarity">
    <text evidence="1">Belongs to the universal ribosomal protein uL16 family.</text>
</comment>
<reference key="1">
    <citation type="journal article" date="2012" name="BMC Genomics">
        <title>Comparative genomics and transcriptomics of lineages I, II, and III strains of Listeria monocytogenes.</title>
        <authorList>
            <person name="Hain T."/>
            <person name="Ghai R."/>
            <person name="Billion A."/>
            <person name="Kuenne C.T."/>
            <person name="Steinweg C."/>
            <person name="Izar B."/>
            <person name="Mohamed W."/>
            <person name="Mraheil M."/>
            <person name="Domann E."/>
            <person name="Schaffrath S."/>
            <person name="Karst U."/>
            <person name="Goesmann A."/>
            <person name="Oehm S."/>
            <person name="Puhler A."/>
            <person name="Merkl R."/>
            <person name="Vorwerk S."/>
            <person name="Glaser P."/>
            <person name="Garrido P."/>
            <person name="Rusniok C."/>
            <person name="Buchrieser C."/>
            <person name="Goebel W."/>
            <person name="Chakraborty T."/>
        </authorList>
    </citation>
    <scope>NUCLEOTIDE SEQUENCE [LARGE SCALE GENOMIC DNA]</scope>
    <source>
        <strain>CLIP80459</strain>
    </source>
</reference>
<dbReference type="EMBL" id="FM242711">
    <property type="protein sequence ID" value="CAS06346.1"/>
    <property type="molecule type" value="Genomic_DNA"/>
</dbReference>
<dbReference type="RefSeq" id="WP_003720943.1">
    <property type="nucleotide sequence ID" value="NC_012488.1"/>
</dbReference>
<dbReference type="SMR" id="C1KZH3"/>
<dbReference type="GeneID" id="93240506"/>
<dbReference type="KEGG" id="lmc:Lm4b_02592"/>
<dbReference type="HOGENOM" id="CLU_078858_2_1_9"/>
<dbReference type="GO" id="GO:0022625">
    <property type="term" value="C:cytosolic large ribosomal subunit"/>
    <property type="evidence" value="ECO:0007669"/>
    <property type="project" value="TreeGrafter"/>
</dbReference>
<dbReference type="GO" id="GO:0019843">
    <property type="term" value="F:rRNA binding"/>
    <property type="evidence" value="ECO:0007669"/>
    <property type="project" value="UniProtKB-UniRule"/>
</dbReference>
<dbReference type="GO" id="GO:0003735">
    <property type="term" value="F:structural constituent of ribosome"/>
    <property type="evidence" value="ECO:0007669"/>
    <property type="project" value="InterPro"/>
</dbReference>
<dbReference type="GO" id="GO:0000049">
    <property type="term" value="F:tRNA binding"/>
    <property type="evidence" value="ECO:0007669"/>
    <property type="project" value="UniProtKB-KW"/>
</dbReference>
<dbReference type="GO" id="GO:0006412">
    <property type="term" value="P:translation"/>
    <property type="evidence" value="ECO:0007669"/>
    <property type="project" value="UniProtKB-UniRule"/>
</dbReference>
<dbReference type="CDD" id="cd01433">
    <property type="entry name" value="Ribosomal_L16_L10e"/>
    <property type="match status" value="1"/>
</dbReference>
<dbReference type="FunFam" id="3.90.1170.10:FF:000001">
    <property type="entry name" value="50S ribosomal protein L16"/>
    <property type="match status" value="1"/>
</dbReference>
<dbReference type="Gene3D" id="3.90.1170.10">
    <property type="entry name" value="Ribosomal protein L10e/L16"/>
    <property type="match status" value="1"/>
</dbReference>
<dbReference type="HAMAP" id="MF_01342">
    <property type="entry name" value="Ribosomal_uL16"/>
    <property type="match status" value="1"/>
</dbReference>
<dbReference type="InterPro" id="IPR047873">
    <property type="entry name" value="Ribosomal_uL16"/>
</dbReference>
<dbReference type="InterPro" id="IPR000114">
    <property type="entry name" value="Ribosomal_uL16_bact-type"/>
</dbReference>
<dbReference type="InterPro" id="IPR020798">
    <property type="entry name" value="Ribosomal_uL16_CS"/>
</dbReference>
<dbReference type="InterPro" id="IPR016180">
    <property type="entry name" value="Ribosomal_uL16_dom"/>
</dbReference>
<dbReference type="InterPro" id="IPR036920">
    <property type="entry name" value="Ribosomal_uL16_sf"/>
</dbReference>
<dbReference type="NCBIfam" id="TIGR01164">
    <property type="entry name" value="rplP_bact"/>
    <property type="match status" value="1"/>
</dbReference>
<dbReference type="PANTHER" id="PTHR12220">
    <property type="entry name" value="50S/60S RIBOSOMAL PROTEIN L16"/>
    <property type="match status" value="1"/>
</dbReference>
<dbReference type="PANTHER" id="PTHR12220:SF13">
    <property type="entry name" value="LARGE RIBOSOMAL SUBUNIT PROTEIN UL16M"/>
    <property type="match status" value="1"/>
</dbReference>
<dbReference type="Pfam" id="PF00252">
    <property type="entry name" value="Ribosomal_L16"/>
    <property type="match status" value="1"/>
</dbReference>
<dbReference type="PRINTS" id="PR00060">
    <property type="entry name" value="RIBOSOMALL16"/>
</dbReference>
<dbReference type="SUPFAM" id="SSF54686">
    <property type="entry name" value="Ribosomal protein L16p/L10e"/>
    <property type="match status" value="1"/>
</dbReference>
<dbReference type="PROSITE" id="PS00586">
    <property type="entry name" value="RIBOSOMAL_L16_1"/>
    <property type="match status" value="1"/>
</dbReference>
<dbReference type="PROSITE" id="PS00701">
    <property type="entry name" value="RIBOSOMAL_L16_2"/>
    <property type="match status" value="1"/>
</dbReference>
<sequence>MLVPKRVKYRREFRGNMRGRAKGGTEVAFGEYGLQAVEASWITNRQIEAARIAMTRYMKRGGKVWIKIFPHKSYTSKPIGVRMGKGKGAPEGWVSPVKRGKIMFEIAGVPEDVAREALRLAAHKLPVKTKIVKREEIGGEANES</sequence>
<protein>
    <recommendedName>
        <fullName evidence="1">Large ribosomal subunit protein uL16</fullName>
    </recommendedName>
    <alternativeName>
        <fullName evidence="2">50S ribosomal protein L16</fullName>
    </alternativeName>
</protein>
<keyword id="KW-0687">Ribonucleoprotein</keyword>
<keyword id="KW-0689">Ribosomal protein</keyword>
<keyword id="KW-0694">RNA-binding</keyword>
<keyword id="KW-0699">rRNA-binding</keyword>
<keyword id="KW-0820">tRNA-binding</keyword>
<feature type="chain" id="PRO_1000214738" description="Large ribosomal subunit protein uL16">
    <location>
        <begin position="1"/>
        <end position="144"/>
    </location>
</feature>
<evidence type="ECO:0000255" key="1">
    <source>
        <dbReference type="HAMAP-Rule" id="MF_01342"/>
    </source>
</evidence>
<evidence type="ECO:0000305" key="2"/>
<proteinExistence type="inferred from homology"/>
<gene>
    <name evidence="1" type="primary">rplP</name>
    <name type="ordered locus">Lm4b_02592</name>
</gene>
<accession>C1KZH3</accession>